<protein>
    <recommendedName>
        <fullName evidence="1">Cell division topological specificity factor</fullName>
    </recommendedName>
</protein>
<organism>
    <name type="scientific">Stutzerimonas stutzeri (strain A1501)</name>
    <name type="common">Pseudomonas stutzeri</name>
    <dbReference type="NCBI Taxonomy" id="379731"/>
    <lineage>
        <taxon>Bacteria</taxon>
        <taxon>Pseudomonadati</taxon>
        <taxon>Pseudomonadota</taxon>
        <taxon>Gammaproteobacteria</taxon>
        <taxon>Pseudomonadales</taxon>
        <taxon>Pseudomonadaceae</taxon>
        <taxon>Stutzerimonas</taxon>
    </lineage>
</organism>
<evidence type="ECO:0000255" key="1">
    <source>
        <dbReference type="HAMAP-Rule" id="MF_00262"/>
    </source>
</evidence>
<accession>A4VJG3</accession>
<gene>
    <name evidence="1" type="primary">minE</name>
    <name type="ordered locus">PST_1423</name>
</gene>
<keyword id="KW-0131">Cell cycle</keyword>
<keyword id="KW-0132">Cell division</keyword>
<keyword id="KW-1185">Reference proteome</keyword>
<proteinExistence type="inferred from homology"/>
<comment type="function">
    <text evidence="1">Prevents the cell division inhibition by proteins MinC and MinD at internal division sites while permitting inhibition at polar sites. This ensures cell division at the proper site by restricting the formation of a division septum at the midpoint of the long axis of the cell.</text>
</comment>
<comment type="similarity">
    <text evidence="1">Belongs to the MinE family.</text>
</comment>
<dbReference type="EMBL" id="CP000304">
    <property type="protein sequence ID" value="ABP79114.1"/>
    <property type="molecule type" value="Genomic_DNA"/>
</dbReference>
<dbReference type="RefSeq" id="WP_011912595.1">
    <property type="nucleotide sequence ID" value="NC_009434.1"/>
</dbReference>
<dbReference type="SMR" id="A4VJG3"/>
<dbReference type="KEGG" id="psa:PST_1423"/>
<dbReference type="eggNOG" id="COG0851">
    <property type="taxonomic scope" value="Bacteria"/>
</dbReference>
<dbReference type="HOGENOM" id="CLU_137929_2_2_6"/>
<dbReference type="Proteomes" id="UP000000233">
    <property type="component" value="Chromosome"/>
</dbReference>
<dbReference type="GO" id="GO:0051301">
    <property type="term" value="P:cell division"/>
    <property type="evidence" value="ECO:0007669"/>
    <property type="project" value="UniProtKB-KW"/>
</dbReference>
<dbReference type="GO" id="GO:0032955">
    <property type="term" value="P:regulation of division septum assembly"/>
    <property type="evidence" value="ECO:0007669"/>
    <property type="project" value="InterPro"/>
</dbReference>
<dbReference type="FunFam" id="3.30.1070.10:FF:000001">
    <property type="entry name" value="Cell division topological specificity factor"/>
    <property type="match status" value="1"/>
</dbReference>
<dbReference type="Gene3D" id="3.30.1070.10">
    <property type="entry name" value="Cell division topological specificity factor MinE"/>
    <property type="match status" value="1"/>
</dbReference>
<dbReference type="HAMAP" id="MF_00262">
    <property type="entry name" value="MinE"/>
    <property type="match status" value="1"/>
</dbReference>
<dbReference type="InterPro" id="IPR005527">
    <property type="entry name" value="MinE"/>
</dbReference>
<dbReference type="InterPro" id="IPR036707">
    <property type="entry name" value="MinE_sf"/>
</dbReference>
<dbReference type="NCBIfam" id="TIGR01215">
    <property type="entry name" value="minE"/>
    <property type="match status" value="1"/>
</dbReference>
<dbReference type="NCBIfam" id="NF001422">
    <property type="entry name" value="PRK00296.1"/>
    <property type="match status" value="1"/>
</dbReference>
<dbReference type="Pfam" id="PF03776">
    <property type="entry name" value="MinE"/>
    <property type="match status" value="1"/>
</dbReference>
<dbReference type="SUPFAM" id="SSF55229">
    <property type="entry name" value="Cell division protein MinE topological specificity domain"/>
    <property type="match status" value="1"/>
</dbReference>
<sequence length="85" mass="9843">MNLLDFFRERKKKETPAAIAKERLQIIVAHERGQRSEPDYLPALQKELVEVIRKYVNIDSDQVHVALEDQGSCSILELNITLPDR</sequence>
<reference key="1">
    <citation type="journal article" date="2008" name="Proc. Natl. Acad. Sci. U.S.A.">
        <title>Nitrogen fixation island and rhizosphere competence traits in the genome of root-associated Pseudomonas stutzeri A1501.</title>
        <authorList>
            <person name="Yan Y."/>
            <person name="Yang J."/>
            <person name="Dou Y."/>
            <person name="Chen M."/>
            <person name="Ping S."/>
            <person name="Peng J."/>
            <person name="Lu W."/>
            <person name="Zhang W."/>
            <person name="Yao Z."/>
            <person name="Li H."/>
            <person name="Liu W."/>
            <person name="He S."/>
            <person name="Geng L."/>
            <person name="Zhang X."/>
            <person name="Yang F."/>
            <person name="Yu H."/>
            <person name="Zhan Y."/>
            <person name="Li D."/>
            <person name="Lin Z."/>
            <person name="Wang Y."/>
            <person name="Elmerich C."/>
            <person name="Lin M."/>
            <person name="Jin Q."/>
        </authorList>
    </citation>
    <scope>NUCLEOTIDE SEQUENCE [LARGE SCALE GENOMIC DNA]</scope>
    <source>
        <strain>A1501</strain>
    </source>
</reference>
<feature type="chain" id="PRO_0000298163" description="Cell division topological specificity factor">
    <location>
        <begin position="1"/>
        <end position="85"/>
    </location>
</feature>
<name>MINE_STUS1</name>